<organism>
    <name type="scientific">Synechococcus sp. (strain PCC 6716)</name>
    <dbReference type="NCBI Taxonomy" id="32048"/>
    <lineage>
        <taxon>Bacteria</taxon>
        <taxon>Bacillati</taxon>
        <taxon>Cyanobacteriota</taxon>
        <taxon>Cyanophyceae</taxon>
        <taxon>Synechococcales</taxon>
        <taxon>Synechococcaceae</taxon>
        <taxon>Synechococcus</taxon>
    </lineage>
</organism>
<name>DHSS_SYNP1</name>
<accession>P14776</accession>
<proteinExistence type="inferred from homology"/>
<keyword id="KW-0963">Cytoplasm</keyword>
<keyword id="KW-0560">Oxidoreductase</keyword>
<keyword id="KW-0663">Pyridoxal phosphate</keyword>
<reference key="1">
    <citation type="journal article" date="1989" name="Nucleic Acids Res.">
        <title>Nucleotide sequence of the gene proposed to encode the small subunit of the soluble hydrogenase of the thermophilic unicellular cyanobacterium Synechococcus PCC 6716.</title>
        <authorList>
            <person name="van der Oost J."/>
            <person name="van Walraven H.S."/>
            <person name="Bogerd J."/>
            <person name="Smit A.B."/>
            <person name="Ewart G.D."/>
            <person name="Smith G.D."/>
        </authorList>
    </citation>
    <scope>NUCLEOTIDE SEQUENCE [GENOMIC DNA]</scope>
</reference>
<feature type="chain" id="PRO_0000150243" description="Soluble hydrogenase, small subunit">
    <location>
        <begin position="1"/>
        <end position="384"/>
    </location>
</feature>
<feature type="modified residue" description="N6-(pyridoxal phosphate)lysine" evidence="1">
    <location>
        <position position="194"/>
    </location>
</feature>
<evidence type="ECO:0000250" key="1"/>
<evidence type="ECO:0000305" key="2"/>
<protein>
    <recommendedName>
        <fullName>Soluble hydrogenase, small subunit</fullName>
        <ecNumber>1.12.-.-</ecNumber>
    </recommendedName>
    <alternativeName>
        <fullName>Tritium exchange subunit</fullName>
    </alternativeName>
</protein>
<sequence length="384" mass="40876">MQDKAMLMIPGPTPVPESVLLSLGKHPIGHRSGEFSQIMAAMTAGIKWLHQTQNEVLILAASGTGAMEAGIINFLSAGDRVVVGCNGKFGDRWGEVCDAYGLTTERISAPWGQPLNPDDFKAVLDGHRQKPSKAVIVTHSETSTGVINDLEAINRHVKAHGQALIIVDAVTSLGAVSVPIDEWGLDVVGSGSQKGYMIPPGLAFVSVSPKAWEAYKTATLPKFYLDLGKYRKDAAKHTTPFTPPVNLFFALKTALEMMQAEGLEAIFQRHQRLMQATRAAMKALNLPLYAADSCASPAITAVAPQGVEAENIRSLMKKRFDIALAGGQDHLKGQIFRIGHLGFVGDRDILAAVSALEAVLAELGYTNFTPGAGVAAASRVLSTA</sequence>
<dbReference type="EC" id="1.12.-.-"/>
<dbReference type="EMBL" id="X16658">
    <property type="protein sequence ID" value="CAA34644.1"/>
    <property type="molecule type" value="Genomic_DNA"/>
</dbReference>
<dbReference type="PIR" id="S06919">
    <property type="entry name" value="HQYCSS"/>
</dbReference>
<dbReference type="SMR" id="P14776"/>
<dbReference type="GO" id="GO:0005737">
    <property type="term" value="C:cytoplasm"/>
    <property type="evidence" value="ECO:0007669"/>
    <property type="project" value="UniProtKB-SubCell"/>
</dbReference>
<dbReference type="GO" id="GO:0008453">
    <property type="term" value="F:alanine-glyoxylate transaminase activity"/>
    <property type="evidence" value="ECO:0007669"/>
    <property type="project" value="TreeGrafter"/>
</dbReference>
<dbReference type="GO" id="GO:0004760">
    <property type="term" value="F:L-serine-pyruvate transaminase activity"/>
    <property type="evidence" value="ECO:0007669"/>
    <property type="project" value="TreeGrafter"/>
</dbReference>
<dbReference type="GO" id="GO:0016491">
    <property type="term" value="F:oxidoreductase activity"/>
    <property type="evidence" value="ECO:0007669"/>
    <property type="project" value="UniProtKB-KW"/>
</dbReference>
<dbReference type="GO" id="GO:0019265">
    <property type="term" value="P:glycine biosynthetic process, by transamination of glyoxylate"/>
    <property type="evidence" value="ECO:0007669"/>
    <property type="project" value="TreeGrafter"/>
</dbReference>
<dbReference type="FunFam" id="3.40.640.10:FF:000054">
    <property type="entry name" value="Serine--glyoxylate aminotransferase"/>
    <property type="match status" value="1"/>
</dbReference>
<dbReference type="FunFam" id="3.90.1150.10:FF:000031">
    <property type="entry name" value="Serine--glyoxylate aminotransferase"/>
    <property type="match status" value="1"/>
</dbReference>
<dbReference type="Gene3D" id="3.90.1150.10">
    <property type="entry name" value="Aspartate Aminotransferase, domain 1"/>
    <property type="match status" value="1"/>
</dbReference>
<dbReference type="Gene3D" id="3.40.640.10">
    <property type="entry name" value="Type I PLP-dependent aspartate aminotransferase-like (Major domain)"/>
    <property type="match status" value="1"/>
</dbReference>
<dbReference type="InterPro" id="IPR000192">
    <property type="entry name" value="Aminotrans_V_dom"/>
</dbReference>
<dbReference type="InterPro" id="IPR020578">
    <property type="entry name" value="Aminotrans_V_PyrdxlP_BS"/>
</dbReference>
<dbReference type="InterPro" id="IPR015424">
    <property type="entry name" value="PyrdxlP-dep_Trfase"/>
</dbReference>
<dbReference type="InterPro" id="IPR015421">
    <property type="entry name" value="PyrdxlP-dep_Trfase_major"/>
</dbReference>
<dbReference type="InterPro" id="IPR015422">
    <property type="entry name" value="PyrdxlP-dep_Trfase_small"/>
</dbReference>
<dbReference type="InterPro" id="IPR024169">
    <property type="entry name" value="SP_NH2Trfase/AEP_transaminase"/>
</dbReference>
<dbReference type="PANTHER" id="PTHR21152:SF40">
    <property type="entry name" value="ALANINE--GLYOXYLATE AMINOTRANSFERASE"/>
    <property type="match status" value="1"/>
</dbReference>
<dbReference type="PANTHER" id="PTHR21152">
    <property type="entry name" value="AMINOTRANSFERASE CLASS V"/>
    <property type="match status" value="1"/>
</dbReference>
<dbReference type="Pfam" id="PF00266">
    <property type="entry name" value="Aminotran_5"/>
    <property type="match status" value="1"/>
</dbReference>
<dbReference type="PIRSF" id="PIRSF000524">
    <property type="entry name" value="SPT"/>
    <property type="match status" value="1"/>
</dbReference>
<dbReference type="SUPFAM" id="SSF53383">
    <property type="entry name" value="PLP-dependent transferases"/>
    <property type="match status" value="1"/>
</dbReference>
<dbReference type="PROSITE" id="PS00595">
    <property type="entry name" value="AA_TRANSFER_CLASS_5"/>
    <property type="match status" value="1"/>
</dbReference>
<comment type="function">
    <text>Soluble hydrogenase catalyzes both production and consumption of hydrogen from suitable artificial electron donors or acceptors. This subunit catalyzes the tritium-exchange activity.</text>
</comment>
<comment type="cofactor">
    <cofactor evidence="1">
        <name>pyridoxal 5'-phosphate</name>
        <dbReference type="ChEBI" id="CHEBI:597326"/>
    </cofactor>
</comment>
<comment type="subunit">
    <text>Heterodimer of a large and a small subunit.</text>
</comment>
<comment type="subcellular location">
    <subcellularLocation>
        <location>Cytoplasm</location>
    </subcellularLocation>
</comment>
<comment type="similarity">
    <text evidence="2">Belongs to the class-V pyridoxal-phosphate-dependent aminotransferase family.</text>
</comment>